<name>GLGB_NITHX</name>
<feature type="chain" id="PRO_0000260669" description="1,4-alpha-glucan branching enzyme GlgB">
    <location>
        <begin position="1"/>
        <end position="716"/>
    </location>
</feature>
<feature type="active site" description="Nucleophile" evidence="1">
    <location>
        <position position="398"/>
    </location>
</feature>
<feature type="active site" description="Proton donor" evidence="1">
    <location>
        <position position="451"/>
    </location>
</feature>
<dbReference type="EC" id="2.4.1.18" evidence="1"/>
<dbReference type="EMBL" id="CP000319">
    <property type="protein sequence ID" value="ABE62286.1"/>
    <property type="molecule type" value="Genomic_DNA"/>
</dbReference>
<dbReference type="RefSeq" id="WP_011509977.1">
    <property type="nucleotide sequence ID" value="NC_007964.1"/>
</dbReference>
<dbReference type="SMR" id="Q1QNB1"/>
<dbReference type="STRING" id="323097.Nham_1464"/>
<dbReference type="CAZy" id="CBM48">
    <property type="family name" value="Carbohydrate-Binding Module Family 48"/>
</dbReference>
<dbReference type="CAZy" id="GH13">
    <property type="family name" value="Glycoside Hydrolase Family 13"/>
</dbReference>
<dbReference type="KEGG" id="nha:Nham_1464"/>
<dbReference type="eggNOG" id="COG0296">
    <property type="taxonomic scope" value="Bacteria"/>
</dbReference>
<dbReference type="HOGENOM" id="CLU_004245_3_2_5"/>
<dbReference type="OrthoDB" id="9800174at2"/>
<dbReference type="UniPathway" id="UPA00164"/>
<dbReference type="Proteomes" id="UP000001953">
    <property type="component" value="Chromosome"/>
</dbReference>
<dbReference type="GO" id="GO:0005829">
    <property type="term" value="C:cytosol"/>
    <property type="evidence" value="ECO:0007669"/>
    <property type="project" value="TreeGrafter"/>
</dbReference>
<dbReference type="GO" id="GO:0003844">
    <property type="term" value="F:1,4-alpha-glucan branching enzyme activity"/>
    <property type="evidence" value="ECO:0007669"/>
    <property type="project" value="UniProtKB-UniRule"/>
</dbReference>
<dbReference type="GO" id="GO:0043169">
    <property type="term" value="F:cation binding"/>
    <property type="evidence" value="ECO:0007669"/>
    <property type="project" value="InterPro"/>
</dbReference>
<dbReference type="GO" id="GO:0004553">
    <property type="term" value="F:hydrolase activity, hydrolyzing O-glycosyl compounds"/>
    <property type="evidence" value="ECO:0007669"/>
    <property type="project" value="InterPro"/>
</dbReference>
<dbReference type="GO" id="GO:0005978">
    <property type="term" value="P:glycogen biosynthetic process"/>
    <property type="evidence" value="ECO:0007669"/>
    <property type="project" value="UniProtKB-UniRule"/>
</dbReference>
<dbReference type="CDD" id="cd11322">
    <property type="entry name" value="AmyAc_Glg_BE"/>
    <property type="match status" value="1"/>
</dbReference>
<dbReference type="CDD" id="cd02855">
    <property type="entry name" value="E_set_GBE_prok_N"/>
    <property type="match status" value="1"/>
</dbReference>
<dbReference type="FunFam" id="2.60.40.10:FF:000169">
    <property type="entry name" value="1,4-alpha-glucan branching enzyme GlgB"/>
    <property type="match status" value="1"/>
</dbReference>
<dbReference type="FunFam" id="2.60.40.1180:FF:000002">
    <property type="entry name" value="1,4-alpha-glucan branching enzyme GlgB"/>
    <property type="match status" value="1"/>
</dbReference>
<dbReference type="FunFam" id="3.20.20.80:FF:000003">
    <property type="entry name" value="1,4-alpha-glucan branching enzyme GlgB"/>
    <property type="match status" value="1"/>
</dbReference>
<dbReference type="Gene3D" id="3.20.20.80">
    <property type="entry name" value="Glycosidases"/>
    <property type="match status" value="1"/>
</dbReference>
<dbReference type="Gene3D" id="2.60.40.1180">
    <property type="entry name" value="Golgi alpha-mannosidase II"/>
    <property type="match status" value="1"/>
</dbReference>
<dbReference type="Gene3D" id="2.60.40.10">
    <property type="entry name" value="Immunoglobulins"/>
    <property type="match status" value="2"/>
</dbReference>
<dbReference type="HAMAP" id="MF_00685">
    <property type="entry name" value="GlgB"/>
    <property type="match status" value="1"/>
</dbReference>
<dbReference type="InterPro" id="IPR006048">
    <property type="entry name" value="A-amylase/branching_C"/>
</dbReference>
<dbReference type="InterPro" id="IPR037439">
    <property type="entry name" value="Branching_enzy"/>
</dbReference>
<dbReference type="InterPro" id="IPR006407">
    <property type="entry name" value="GlgB"/>
</dbReference>
<dbReference type="InterPro" id="IPR054169">
    <property type="entry name" value="GlgB_N"/>
</dbReference>
<dbReference type="InterPro" id="IPR044143">
    <property type="entry name" value="GlgB_N_E_set_prok"/>
</dbReference>
<dbReference type="InterPro" id="IPR006047">
    <property type="entry name" value="Glyco_hydro_13_cat_dom"/>
</dbReference>
<dbReference type="InterPro" id="IPR004193">
    <property type="entry name" value="Glyco_hydro_13_N"/>
</dbReference>
<dbReference type="InterPro" id="IPR013780">
    <property type="entry name" value="Glyco_hydro_b"/>
</dbReference>
<dbReference type="InterPro" id="IPR017853">
    <property type="entry name" value="Glycoside_hydrolase_SF"/>
</dbReference>
<dbReference type="InterPro" id="IPR013783">
    <property type="entry name" value="Ig-like_fold"/>
</dbReference>
<dbReference type="InterPro" id="IPR014756">
    <property type="entry name" value="Ig_E-set"/>
</dbReference>
<dbReference type="NCBIfam" id="TIGR01515">
    <property type="entry name" value="branching_enzym"/>
    <property type="match status" value="1"/>
</dbReference>
<dbReference type="NCBIfam" id="NF003811">
    <property type="entry name" value="PRK05402.1"/>
    <property type="match status" value="1"/>
</dbReference>
<dbReference type="NCBIfam" id="NF008967">
    <property type="entry name" value="PRK12313.1"/>
    <property type="match status" value="1"/>
</dbReference>
<dbReference type="PANTHER" id="PTHR43651">
    <property type="entry name" value="1,4-ALPHA-GLUCAN-BRANCHING ENZYME"/>
    <property type="match status" value="1"/>
</dbReference>
<dbReference type="PANTHER" id="PTHR43651:SF3">
    <property type="entry name" value="1,4-ALPHA-GLUCAN-BRANCHING ENZYME"/>
    <property type="match status" value="1"/>
</dbReference>
<dbReference type="Pfam" id="PF00128">
    <property type="entry name" value="Alpha-amylase"/>
    <property type="match status" value="1"/>
</dbReference>
<dbReference type="Pfam" id="PF02806">
    <property type="entry name" value="Alpha-amylase_C"/>
    <property type="match status" value="1"/>
</dbReference>
<dbReference type="Pfam" id="PF02922">
    <property type="entry name" value="CBM_48"/>
    <property type="match status" value="1"/>
</dbReference>
<dbReference type="Pfam" id="PF22019">
    <property type="entry name" value="GlgB_N"/>
    <property type="match status" value="1"/>
</dbReference>
<dbReference type="PIRSF" id="PIRSF000463">
    <property type="entry name" value="GlgB"/>
    <property type="match status" value="1"/>
</dbReference>
<dbReference type="SMART" id="SM00642">
    <property type="entry name" value="Aamy"/>
    <property type="match status" value="1"/>
</dbReference>
<dbReference type="SUPFAM" id="SSF51445">
    <property type="entry name" value="(Trans)glycosidases"/>
    <property type="match status" value="1"/>
</dbReference>
<dbReference type="SUPFAM" id="SSF81296">
    <property type="entry name" value="E set domains"/>
    <property type="match status" value="1"/>
</dbReference>
<dbReference type="SUPFAM" id="SSF51011">
    <property type="entry name" value="Glycosyl hydrolase domain"/>
    <property type="match status" value="1"/>
</dbReference>
<protein>
    <recommendedName>
        <fullName evidence="1">1,4-alpha-glucan branching enzyme GlgB</fullName>
        <ecNumber evidence="1">2.4.1.18</ecNumber>
    </recommendedName>
    <alternativeName>
        <fullName evidence="1">1,4-alpha-D-glucan:1,4-alpha-D-glucan 6-glucosyl-transferase</fullName>
    </alternativeName>
    <alternativeName>
        <fullName evidence="1">Alpha-(1-&gt;4)-glucan branching enzyme</fullName>
    </alternativeName>
    <alternativeName>
        <fullName evidence="1">Glycogen branching enzyme</fullName>
        <shortName evidence="1">BE</shortName>
    </alternativeName>
</protein>
<evidence type="ECO:0000255" key="1">
    <source>
        <dbReference type="HAMAP-Rule" id="MF_00685"/>
    </source>
</evidence>
<accession>Q1QNB1</accession>
<organism>
    <name type="scientific">Nitrobacter hamburgensis (strain DSM 10229 / NCIMB 13809 / X14)</name>
    <dbReference type="NCBI Taxonomy" id="323097"/>
    <lineage>
        <taxon>Bacteria</taxon>
        <taxon>Pseudomonadati</taxon>
        <taxon>Pseudomonadota</taxon>
        <taxon>Alphaproteobacteria</taxon>
        <taxon>Hyphomicrobiales</taxon>
        <taxon>Nitrobacteraceae</taxon>
        <taxon>Nitrobacter</taxon>
    </lineage>
</organism>
<gene>
    <name evidence="1" type="primary">glgB</name>
    <name type="ordered locus">Nham_1464</name>
</gene>
<reference key="1">
    <citation type="submission" date="2006-03" db="EMBL/GenBank/DDBJ databases">
        <title>Complete sequence of chromosome of Nitrobacter hamburgensis X14.</title>
        <authorList>
            <consortium name="US DOE Joint Genome Institute"/>
            <person name="Copeland A."/>
            <person name="Lucas S."/>
            <person name="Lapidus A."/>
            <person name="Barry K."/>
            <person name="Detter J.C."/>
            <person name="Glavina del Rio T."/>
            <person name="Hammon N."/>
            <person name="Israni S."/>
            <person name="Dalin E."/>
            <person name="Tice H."/>
            <person name="Pitluck S."/>
            <person name="Chain P."/>
            <person name="Malfatti S."/>
            <person name="Shin M."/>
            <person name="Vergez L."/>
            <person name="Schmutz J."/>
            <person name="Larimer F."/>
            <person name="Land M."/>
            <person name="Hauser L."/>
            <person name="Kyrpides N."/>
            <person name="Ivanova N."/>
            <person name="Ward B."/>
            <person name="Arp D."/>
            <person name="Klotz M."/>
            <person name="Stein L."/>
            <person name="O'Mullan G."/>
            <person name="Starkenburg S."/>
            <person name="Sayavedra L."/>
            <person name="Poret-Peterson A.T."/>
            <person name="Gentry M.E."/>
            <person name="Bruce D."/>
            <person name="Richardson P."/>
        </authorList>
    </citation>
    <scope>NUCLEOTIDE SEQUENCE [LARGE SCALE GENOMIC DNA]</scope>
    <source>
        <strain>DSM 10229 / NCIMB 13809 / X14</strain>
    </source>
</reference>
<keyword id="KW-0119">Carbohydrate metabolism</keyword>
<keyword id="KW-0320">Glycogen biosynthesis</keyword>
<keyword id="KW-0321">Glycogen metabolism</keyword>
<keyword id="KW-0328">Glycosyltransferase</keyword>
<keyword id="KW-1185">Reference proteome</keyword>
<keyword id="KW-0808">Transferase</keyword>
<sequence length="716" mass="80882">MIELSSEARAIVEGRHSDPFHYLGRHRENDRQVVRAYLPEASDVRVVDEHGGETTLTRIHDAGLFLGDLPNGAKRYRLRARFGADTVELEDPYRFPPILSDFDLYLLGEGTDQRLYDKLGAHPITMDGVGGTGFVVLAPNARAVAVVGDFNCWDRRRHPMRVRGNGYWELFIPGAQTGDRYKFAITDKSGSLLPLKSDPMAFAAEVRPNTASIVVDEAALPCPTPAAATINARRAPISIYEVHLGSWRRGDDNRWLSYRELADTLPRYASSLGFTHIELMPVNEHPFDGSWGYQPTGLYAPTSRFGSPDDFAHLVDACHREGLGVLLDWVPGHFPDDPHGLGHFDGTAFYEHANPLQGRHLDWDTLIYNYGRTEVVNFLVANALFWLDRYGLDGLRVDAVASMLYLDYSRAEGGWIPNKHGGRENLEAIAFLRRFNREVFAKFPHATTIAEESTAWPQVSRPIEFGGLGFGYKWNMGWMHDTLDYIGKDPIYRKHHHGQILFGLHYAFSENFILPLSHDEVVHEKRSILGRMPGDDWQRFANLRAYYAFMFGHPGKKLMFMGAEFGQEREWNHDHALDWHLLDQARHQGVQAVVRDLNALYRDVPALHELDCDPAGFEWIMANDADRSVFAWMRKGESGRARCLVIANFTPTVHRSYRVRVPFAGKWREALNTDSAHYGGSNVGNNGVVETLDGVIPELSLTLPPLAVIFLVPERA</sequence>
<comment type="function">
    <text evidence="1">Catalyzes the formation of the alpha-1,6-glucosidic linkages in glycogen by scission of a 1,4-alpha-linked oligosaccharide from growing alpha-1,4-glucan chains and the subsequent attachment of the oligosaccharide to the alpha-1,6 position.</text>
</comment>
<comment type="catalytic activity">
    <reaction evidence="1">
        <text>Transfers a segment of a (1-&gt;4)-alpha-D-glucan chain to a primary hydroxy group in a similar glucan chain.</text>
        <dbReference type="EC" id="2.4.1.18"/>
    </reaction>
</comment>
<comment type="pathway">
    <text evidence="1">Glycan biosynthesis; glycogen biosynthesis.</text>
</comment>
<comment type="subunit">
    <text evidence="1">Monomer.</text>
</comment>
<comment type="similarity">
    <text evidence="1">Belongs to the glycosyl hydrolase 13 family. GlgB subfamily.</text>
</comment>
<proteinExistence type="inferred from homology"/>